<keyword id="KW-0963">Cytoplasm</keyword>
<keyword id="KW-0489">Methyltransferase</keyword>
<keyword id="KW-1185">Reference proteome</keyword>
<keyword id="KW-0698">rRNA processing</keyword>
<keyword id="KW-0949">S-adenosyl-L-methionine</keyword>
<keyword id="KW-0808">Transferase</keyword>
<dbReference type="EC" id="2.1.1.166" evidence="1"/>
<dbReference type="EMBL" id="FM180568">
    <property type="protein sequence ID" value="CAS11006.1"/>
    <property type="molecule type" value="Genomic_DNA"/>
</dbReference>
<dbReference type="RefSeq" id="WP_000145975.1">
    <property type="nucleotide sequence ID" value="NC_011601.1"/>
</dbReference>
<dbReference type="SMR" id="B7UJ72"/>
<dbReference type="GeneID" id="93778802"/>
<dbReference type="KEGG" id="ecg:E2348C_3458"/>
<dbReference type="HOGENOM" id="CLU_009422_4_0_6"/>
<dbReference type="Proteomes" id="UP000008205">
    <property type="component" value="Chromosome"/>
</dbReference>
<dbReference type="GO" id="GO:0005737">
    <property type="term" value="C:cytoplasm"/>
    <property type="evidence" value="ECO:0007669"/>
    <property type="project" value="UniProtKB-SubCell"/>
</dbReference>
<dbReference type="GO" id="GO:0008650">
    <property type="term" value="F:rRNA (uridine-2'-O-)-methyltransferase activity"/>
    <property type="evidence" value="ECO:0007669"/>
    <property type="project" value="UniProtKB-UniRule"/>
</dbReference>
<dbReference type="CDD" id="cd02440">
    <property type="entry name" value="AdoMet_MTases"/>
    <property type="match status" value="1"/>
</dbReference>
<dbReference type="FunFam" id="3.40.50.150:FF:000005">
    <property type="entry name" value="Ribosomal RNA large subunit methyltransferase E"/>
    <property type="match status" value="1"/>
</dbReference>
<dbReference type="Gene3D" id="3.40.50.150">
    <property type="entry name" value="Vaccinia Virus protein VP39"/>
    <property type="match status" value="1"/>
</dbReference>
<dbReference type="HAMAP" id="MF_01547">
    <property type="entry name" value="RNA_methyltr_E"/>
    <property type="match status" value="1"/>
</dbReference>
<dbReference type="InterPro" id="IPR050082">
    <property type="entry name" value="RNA_methyltr_RlmE"/>
</dbReference>
<dbReference type="InterPro" id="IPR002877">
    <property type="entry name" value="RNA_MeTrfase_FtsJ_dom"/>
</dbReference>
<dbReference type="InterPro" id="IPR015507">
    <property type="entry name" value="rRNA-MeTfrase_E"/>
</dbReference>
<dbReference type="InterPro" id="IPR004512">
    <property type="entry name" value="rRNA_MeTrfase_gammaproteobac"/>
</dbReference>
<dbReference type="InterPro" id="IPR029063">
    <property type="entry name" value="SAM-dependent_MTases_sf"/>
</dbReference>
<dbReference type="NCBIfam" id="NF008390">
    <property type="entry name" value="PRK11188.1"/>
    <property type="match status" value="1"/>
</dbReference>
<dbReference type="NCBIfam" id="TIGR00438">
    <property type="entry name" value="rrmJ"/>
    <property type="match status" value="1"/>
</dbReference>
<dbReference type="PANTHER" id="PTHR10920">
    <property type="entry name" value="RIBOSOMAL RNA METHYLTRANSFERASE"/>
    <property type="match status" value="1"/>
</dbReference>
<dbReference type="PANTHER" id="PTHR10920:SF18">
    <property type="entry name" value="RRNA METHYLTRANSFERASE 2, MITOCHONDRIAL"/>
    <property type="match status" value="1"/>
</dbReference>
<dbReference type="Pfam" id="PF01728">
    <property type="entry name" value="FtsJ"/>
    <property type="match status" value="1"/>
</dbReference>
<dbReference type="PIRSF" id="PIRSF005461">
    <property type="entry name" value="23S_rRNA_mtase"/>
    <property type="match status" value="1"/>
</dbReference>
<dbReference type="SUPFAM" id="SSF53335">
    <property type="entry name" value="S-adenosyl-L-methionine-dependent methyltransferases"/>
    <property type="match status" value="1"/>
</dbReference>
<protein>
    <recommendedName>
        <fullName evidence="1">Ribosomal RNA large subunit methyltransferase E</fullName>
        <ecNumber evidence="1">2.1.1.166</ecNumber>
    </recommendedName>
    <alternativeName>
        <fullName evidence="1">23S rRNA Um2552 methyltransferase</fullName>
    </alternativeName>
    <alternativeName>
        <fullName evidence="1">rRNA (uridine-2'-O-)-methyltransferase</fullName>
    </alternativeName>
</protein>
<accession>B7UJ72</accession>
<organism>
    <name type="scientific">Escherichia coli O127:H6 (strain E2348/69 / EPEC)</name>
    <dbReference type="NCBI Taxonomy" id="574521"/>
    <lineage>
        <taxon>Bacteria</taxon>
        <taxon>Pseudomonadati</taxon>
        <taxon>Pseudomonadota</taxon>
        <taxon>Gammaproteobacteria</taxon>
        <taxon>Enterobacterales</taxon>
        <taxon>Enterobacteriaceae</taxon>
        <taxon>Escherichia</taxon>
    </lineage>
</organism>
<feature type="chain" id="PRO_1000185294" description="Ribosomal RNA large subunit methyltransferase E">
    <location>
        <begin position="1"/>
        <end position="209"/>
    </location>
</feature>
<feature type="active site" description="Proton acceptor" evidence="1">
    <location>
        <position position="164"/>
    </location>
</feature>
<feature type="binding site" evidence="1">
    <location>
        <position position="63"/>
    </location>
    <ligand>
        <name>S-adenosyl-L-methionine</name>
        <dbReference type="ChEBI" id="CHEBI:59789"/>
    </ligand>
</feature>
<feature type="binding site" evidence="1">
    <location>
        <position position="65"/>
    </location>
    <ligand>
        <name>S-adenosyl-L-methionine</name>
        <dbReference type="ChEBI" id="CHEBI:59789"/>
    </ligand>
</feature>
<feature type="binding site" evidence="1">
    <location>
        <position position="83"/>
    </location>
    <ligand>
        <name>S-adenosyl-L-methionine</name>
        <dbReference type="ChEBI" id="CHEBI:59789"/>
    </ligand>
</feature>
<feature type="binding site" evidence="1">
    <location>
        <position position="99"/>
    </location>
    <ligand>
        <name>S-adenosyl-L-methionine</name>
        <dbReference type="ChEBI" id="CHEBI:59789"/>
    </ligand>
</feature>
<feature type="binding site" evidence="1">
    <location>
        <position position="124"/>
    </location>
    <ligand>
        <name>S-adenosyl-L-methionine</name>
        <dbReference type="ChEBI" id="CHEBI:59789"/>
    </ligand>
</feature>
<comment type="function">
    <text evidence="1">Specifically methylates the uridine in position 2552 of 23S rRNA at the 2'-O position of the ribose in the fully assembled 50S ribosomal subunit.</text>
</comment>
<comment type="catalytic activity">
    <reaction evidence="1">
        <text>uridine(2552) in 23S rRNA + S-adenosyl-L-methionine = 2'-O-methyluridine(2552) in 23S rRNA + S-adenosyl-L-homocysteine + H(+)</text>
        <dbReference type="Rhea" id="RHEA:42720"/>
        <dbReference type="Rhea" id="RHEA-COMP:10202"/>
        <dbReference type="Rhea" id="RHEA-COMP:10203"/>
        <dbReference type="ChEBI" id="CHEBI:15378"/>
        <dbReference type="ChEBI" id="CHEBI:57856"/>
        <dbReference type="ChEBI" id="CHEBI:59789"/>
        <dbReference type="ChEBI" id="CHEBI:65315"/>
        <dbReference type="ChEBI" id="CHEBI:74478"/>
        <dbReference type="EC" id="2.1.1.166"/>
    </reaction>
</comment>
<comment type="subcellular location">
    <subcellularLocation>
        <location evidence="1">Cytoplasm</location>
    </subcellularLocation>
</comment>
<comment type="similarity">
    <text evidence="1">Belongs to the class I-like SAM-binding methyltransferase superfamily. RNA methyltransferase RlmE family.</text>
</comment>
<proteinExistence type="inferred from homology"/>
<sequence>MTGKKRSASSSRWLQEHFSDKYVQQAQKKGLRSRAWFKLDEIQQSDKLFKPGMTVVDLGAAPGGWSQYVVTQIGGKGRIIACDLLPMDPIVGVDFLQGDFRDELVMKALLERVGDSKVQVVMSDMAPNMSGTPAVDIPRAMYLVELALEMCRDVLAPGGSFVVKVFQGEGFDEYLREIRSLFTKVKVRKPDSSRARSREVYIVATGRKP</sequence>
<name>RLME_ECO27</name>
<reference key="1">
    <citation type="journal article" date="2009" name="J. Bacteriol.">
        <title>Complete genome sequence and comparative genome analysis of enteropathogenic Escherichia coli O127:H6 strain E2348/69.</title>
        <authorList>
            <person name="Iguchi A."/>
            <person name="Thomson N.R."/>
            <person name="Ogura Y."/>
            <person name="Saunders D."/>
            <person name="Ooka T."/>
            <person name="Henderson I.R."/>
            <person name="Harris D."/>
            <person name="Asadulghani M."/>
            <person name="Kurokawa K."/>
            <person name="Dean P."/>
            <person name="Kenny B."/>
            <person name="Quail M.A."/>
            <person name="Thurston S."/>
            <person name="Dougan G."/>
            <person name="Hayashi T."/>
            <person name="Parkhill J."/>
            <person name="Frankel G."/>
        </authorList>
    </citation>
    <scope>NUCLEOTIDE SEQUENCE [LARGE SCALE GENOMIC DNA]</scope>
    <source>
        <strain>E2348/69 / EPEC</strain>
    </source>
</reference>
<gene>
    <name evidence="1" type="primary">rlmE</name>
    <name evidence="1" type="synonym">ftsJ</name>
    <name evidence="1" type="synonym">rrmJ</name>
    <name type="ordered locus">E2348C_3458</name>
</gene>
<evidence type="ECO:0000255" key="1">
    <source>
        <dbReference type="HAMAP-Rule" id="MF_01547"/>
    </source>
</evidence>